<name>GLO2_SHEDO</name>
<evidence type="ECO:0000255" key="1">
    <source>
        <dbReference type="HAMAP-Rule" id="MF_01374"/>
    </source>
</evidence>
<dbReference type="EC" id="3.1.2.6" evidence="1"/>
<dbReference type="EMBL" id="CP000302">
    <property type="protein sequence ID" value="ABE55304.1"/>
    <property type="molecule type" value="Genomic_DNA"/>
</dbReference>
<dbReference type="RefSeq" id="WP_011496460.1">
    <property type="nucleotide sequence ID" value="NC_007954.1"/>
</dbReference>
<dbReference type="SMR" id="Q12MM2"/>
<dbReference type="STRING" id="318161.Sden_2021"/>
<dbReference type="KEGG" id="sdn:Sden_2021"/>
<dbReference type="eggNOG" id="COG0491">
    <property type="taxonomic scope" value="Bacteria"/>
</dbReference>
<dbReference type="HOGENOM" id="CLU_030571_4_1_6"/>
<dbReference type="OrthoDB" id="9802248at2"/>
<dbReference type="UniPathway" id="UPA00619">
    <property type="reaction ID" value="UER00676"/>
</dbReference>
<dbReference type="Proteomes" id="UP000001982">
    <property type="component" value="Chromosome"/>
</dbReference>
<dbReference type="GO" id="GO:0004416">
    <property type="term" value="F:hydroxyacylglutathione hydrolase activity"/>
    <property type="evidence" value="ECO:0007669"/>
    <property type="project" value="UniProtKB-UniRule"/>
</dbReference>
<dbReference type="GO" id="GO:0046872">
    <property type="term" value="F:metal ion binding"/>
    <property type="evidence" value="ECO:0007669"/>
    <property type="project" value="UniProtKB-KW"/>
</dbReference>
<dbReference type="GO" id="GO:0019243">
    <property type="term" value="P:methylglyoxal catabolic process to D-lactate via S-lactoyl-glutathione"/>
    <property type="evidence" value="ECO:0007669"/>
    <property type="project" value="InterPro"/>
</dbReference>
<dbReference type="CDD" id="cd07723">
    <property type="entry name" value="hydroxyacylglutathione_hydrolase_MBL-fold"/>
    <property type="match status" value="1"/>
</dbReference>
<dbReference type="Gene3D" id="3.60.15.10">
    <property type="entry name" value="Ribonuclease Z/Hydroxyacylglutathione hydrolase-like"/>
    <property type="match status" value="1"/>
</dbReference>
<dbReference type="HAMAP" id="MF_01374">
    <property type="entry name" value="Glyoxalase_2"/>
    <property type="match status" value="1"/>
</dbReference>
<dbReference type="InterPro" id="IPR035680">
    <property type="entry name" value="Clx_II_MBL"/>
</dbReference>
<dbReference type="InterPro" id="IPR050110">
    <property type="entry name" value="Glyoxalase_II_hydrolase"/>
</dbReference>
<dbReference type="InterPro" id="IPR032282">
    <property type="entry name" value="HAGH_C"/>
</dbReference>
<dbReference type="InterPro" id="IPR017782">
    <property type="entry name" value="Hydroxyacylglutathione_Hdrlase"/>
</dbReference>
<dbReference type="InterPro" id="IPR001279">
    <property type="entry name" value="Metallo-B-lactamas"/>
</dbReference>
<dbReference type="InterPro" id="IPR036866">
    <property type="entry name" value="RibonucZ/Hydroxyglut_hydro"/>
</dbReference>
<dbReference type="NCBIfam" id="TIGR03413">
    <property type="entry name" value="GSH_gloB"/>
    <property type="match status" value="1"/>
</dbReference>
<dbReference type="PANTHER" id="PTHR43705">
    <property type="entry name" value="HYDROXYACYLGLUTATHIONE HYDROLASE"/>
    <property type="match status" value="1"/>
</dbReference>
<dbReference type="PANTHER" id="PTHR43705:SF1">
    <property type="entry name" value="HYDROXYACYLGLUTATHIONE HYDROLASE GLOB"/>
    <property type="match status" value="1"/>
</dbReference>
<dbReference type="Pfam" id="PF16123">
    <property type="entry name" value="HAGH_C"/>
    <property type="match status" value="1"/>
</dbReference>
<dbReference type="Pfam" id="PF00753">
    <property type="entry name" value="Lactamase_B"/>
    <property type="match status" value="2"/>
</dbReference>
<dbReference type="PIRSF" id="PIRSF005457">
    <property type="entry name" value="Glx"/>
    <property type="match status" value="1"/>
</dbReference>
<dbReference type="SMART" id="SM00849">
    <property type="entry name" value="Lactamase_B"/>
    <property type="match status" value="1"/>
</dbReference>
<dbReference type="SUPFAM" id="SSF56281">
    <property type="entry name" value="Metallo-hydrolase/oxidoreductase"/>
    <property type="match status" value="1"/>
</dbReference>
<keyword id="KW-0378">Hydrolase</keyword>
<keyword id="KW-0479">Metal-binding</keyword>
<keyword id="KW-1185">Reference proteome</keyword>
<keyword id="KW-0862">Zinc</keyword>
<accession>Q12MM2</accession>
<proteinExistence type="inferred from homology"/>
<gene>
    <name evidence="1" type="primary">gloB</name>
    <name type="ordered locus">Sden_2021</name>
</gene>
<protein>
    <recommendedName>
        <fullName evidence="1">Hydroxyacylglutathione hydrolase</fullName>
        <ecNumber evidence="1">3.1.2.6</ecNumber>
    </recommendedName>
    <alternativeName>
        <fullName evidence="1">Glyoxalase II</fullName>
        <shortName evidence="1">Glx II</shortName>
    </alternativeName>
</protein>
<feature type="chain" id="PRO_1000144806" description="Hydroxyacylglutathione hydrolase">
    <location>
        <begin position="1"/>
        <end position="258"/>
    </location>
</feature>
<feature type="binding site" evidence="1">
    <location>
        <position position="55"/>
    </location>
    <ligand>
        <name>Zn(2+)</name>
        <dbReference type="ChEBI" id="CHEBI:29105"/>
        <label>1</label>
    </ligand>
</feature>
<feature type="binding site" evidence="1">
    <location>
        <position position="57"/>
    </location>
    <ligand>
        <name>Zn(2+)</name>
        <dbReference type="ChEBI" id="CHEBI:29105"/>
        <label>1</label>
    </ligand>
</feature>
<feature type="binding site" evidence="1">
    <location>
        <position position="59"/>
    </location>
    <ligand>
        <name>Zn(2+)</name>
        <dbReference type="ChEBI" id="CHEBI:29105"/>
        <label>2</label>
    </ligand>
</feature>
<feature type="binding site" evidence="1">
    <location>
        <position position="60"/>
    </location>
    <ligand>
        <name>Zn(2+)</name>
        <dbReference type="ChEBI" id="CHEBI:29105"/>
        <label>2</label>
    </ligand>
</feature>
<feature type="binding site" evidence="1">
    <location>
        <position position="115"/>
    </location>
    <ligand>
        <name>Zn(2+)</name>
        <dbReference type="ChEBI" id="CHEBI:29105"/>
        <label>1</label>
    </ligand>
</feature>
<feature type="binding site" evidence="1">
    <location>
        <position position="132"/>
    </location>
    <ligand>
        <name>Zn(2+)</name>
        <dbReference type="ChEBI" id="CHEBI:29105"/>
        <label>1</label>
    </ligand>
</feature>
<feature type="binding site" evidence="1">
    <location>
        <position position="132"/>
    </location>
    <ligand>
        <name>Zn(2+)</name>
        <dbReference type="ChEBI" id="CHEBI:29105"/>
        <label>2</label>
    </ligand>
</feature>
<feature type="binding site" evidence="1">
    <location>
        <position position="170"/>
    </location>
    <ligand>
        <name>Zn(2+)</name>
        <dbReference type="ChEBI" id="CHEBI:29105"/>
        <label>2</label>
    </ligand>
</feature>
<comment type="function">
    <text evidence="1">Thiolesterase that catalyzes the hydrolysis of S-D-lactoyl-glutathione to form glutathione and D-lactic acid.</text>
</comment>
<comment type="catalytic activity">
    <reaction evidence="1">
        <text>an S-(2-hydroxyacyl)glutathione + H2O = a 2-hydroxy carboxylate + glutathione + H(+)</text>
        <dbReference type="Rhea" id="RHEA:21864"/>
        <dbReference type="ChEBI" id="CHEBI:15377"/>
        <dbReference type="ChEBI" id="CHEBI:15378"/>
        <dbReference type="ChEBI" id="CHEBI:57925"/>
        <dbReference type="ChEBI" id="CHEBI:58896"/>
        <dbReference type="ChEBI" id="CHEBI:71261"/>
        <dbReference type="EC" id="3.1.2.6"/>
    </reaction>
</comment>
<comment type="cofactor">
    <cofactor evidence="1">
        <name>Zn(2+)</name>
        <dbReference type="ChEBI" id="CHEBI:29105"/>
    </cofactor>
    <text evidence="1">Binds 2 Zn(2+) ions per subunit.</text>
</comment>
<comment type="pathway">
    <text evidence="1">Secondary metabolite metabolism; methylglyoxal degradation; (R)-lactate from methylglyoxal: step 2/2.</text>
</comment>
<comment type="subunit">
    <text evidence="1">Monomer.</text>
</comment>
<comment type="similarity">
    <text evidence="1">Belongs to the metallo-beta-lactamase superfamily. Glyoxalase II family.</text>
</comment>
<organism>
    <name type="scientific">Shewanella denitrificans (strain OS217 / ATCC BAA-1090 / DSM 15013)</name>
    <dbReference type="NCBI Taxonomy" id="318161"/>
    <lineage>
        <taxon>Bacteria</taxon>
        <taxon>Pseudomonadati</taxon>
        <taxon>Pseudomonadota</taxon>
        <taxon>Gammaproteobacteria</taxon>
        <taxon>Alteromonadales</taxon>
        <taxon>Shewanellaceae</taxon>
        <taxon>Shewanella</taxon>
    </lineage>
</organism>
<sequence>MLTITAIPAFNDNYFWIVRQADSNFAYVVDPGVAQPVIDYILAHDLILAGVLITHKHADHVGGIQGLQDFYQNSLPVYGPKAEGIAGITHEIIDERTLCLPHLEANVEIIPVPGHTLGHHAYLIEDAIFCGDTLFSVGCGRIFEGSAAQMLASLTKLASLPAHCKIYCAHEYTQSNINFALTVTPNNPNLLQYASWVAKARADNIPSLPSFLSTELAVNPFLRCHTYEVKTAVASQFNTEINDELQTFTLLRKWKDNF</sequence>
<reference key="1">
    <citation type="submission" date="2006-03" db="EMBL/GenBank/DDBJ databases">
        <title>Complete sequence of Shewanella denitrificans OS217.</title>
        <authorList>
            <consortium name="US DOE Joint Genome Institute"/>
            <person name="Copeland A."/>
            <person name="Lucas S."/>
            <person name="Lapidus A."/>
            <person name="Barry K."/>
            <person name="Detter J.C."/>
            <person name="Glavina del Rio T."/>
            <person name="Hammon N."/>
            <person name="Israni S."/>
            <person name="Dalin E."/>
            <person name="Tice H."/>
            <person name="Pitluck S."/>
            <person name="Brettin T."/>
            <person name="Bruce D."/>
            <person name="Han C."/>
            <person name="Tapia R."/>
            <person name="Gilna P."/>
            <person name="Kiss H."/>
            <person name="Schmutz J."/>
            <person name="Larimer F."/>
            <person name="Land M."/>
            <person name="Hauser L."/>
            <person name="Kyrpides N."/>
            <person name="Lykidis A."/>
            <person name="Richardson P."/>
        </authorList>
    </citation>
    <scope>NUCLEOTIDE SEQUENCE [LARGE SCALE GENOMIC DNA]</scope>
    <source>
        <strain>OS217 / ATCC BAA-1090 / DSM 15013</strain>
    </source>
</reference>